<comment type="function">
    <text evidence="1">Specifically methylates guanosine-37 in various tRNAs.</text>
</comment>
<comment type="catalytic activity">
    <reaction>
        <text>guanosine(37) in tRNA + S-adenosyl-L-methionine = N(1)-methylguanosine(37) in tRNA + S-adenosyl-L-homocysteine + H(+)</text>
        <dbReference type="Rhea" id="RHEA:36899"/>
        <dbReference type="Rhea" id="RHEA-COMP:10145"/>
        <dbReference type="Rhea" id="RHEA-COMP:10147"/>
        <dbReference type="ChEBI" id="CHEBI:15378"/>
        <dbReference type="ChEBI" id="CHEBI:57856"/>
        <dbReference type="ChEBI" id="CHEBI:59789"/>
        <dbReference type="ChEBI" id="CHEBI:73542"/>
        <dbReference type="ChEBI" id="CHEBI:74269"/>
        <dbReference type="EC" id="2.1.1.228"/>
    </reaction>
</comment>
<comment type="subunit">
    <text evidence="1">Homodimer.</text>
</comment>
<comment type="subcellular location">
    <subcellularLocation>
        <location evidence="2">Cytoplasm</location>
    </subcellularLocation>
</comment>
<comment type="similarity">
    <text evidence="2">Belongs to the RNA methyltransferase TrmD family.</text>
</comment>
<protein>
    <recommendedName>
        <fullName>tRNA (guanine-N(1)-)-methyltransferase</fullName>
        <ecNumber>2.1.1.228</ecNumber>
    </recommendedName>
    <alternativeName>
        <fullName>M1G-methyltransferase</fullName>
    </alternativeName>
    <alternativeName>
        <fullName>tRNA [GM37] methyltransferase</fullName>
    </alternativeName>
</protein>
<accession>P66969</accession>
<accession>A0A1R3Y2J7</accession>
<accession>Q10797</accession>
<accession>X2BLV2</accession>
<evidence type="ECO:0000250" key="1"/>
<evidence type="ECO:0000305" key="2"/>
<reference key="1">
    <citation type="journal article" date="2003" name="Proc. Natl. Acad. Sci. U.S.A.">
        <title>The complete genome sequence of Mycobacterium bovis.</title>
        <authorList>
            <person name="Garnier T."/>
            <person name="Eiglmeier K."/>
            <person name="Camus J.-C."/>
            <person name="Medina N."/>
            <person name="Mansoor H."/>
            <person name="Pryor M."/>
            <person name="Duthoy S."/>
            <person name="Grondin S."/>
            <person name="Lacroix C."/>
            <person name="Monsempe C."/>
            <person name="Simon S."/>
            <person name="Harris B."/>
            <person name="Atkin R."/>
            <person name="Doggett J."/>
            <person name="Mayes R."/>
            <person name="Keating L."/>
            <person name="Wheeler P.R."/>
            <person name="Parkhill J."/>
            <person name="Barrell B.G."/>
            <person name="Cole S.T."/>
            <person name="Gordon S.V."/>
            <person name="Hewinson R.G."/>
        </authorList>
    </citation>
    <scope>NUCLEOTIDE SEQUENCE [LARGE SCALE GENOMIC DNA]</scope>
    <source>
        <strain>ATCC BAA-935 / AF2122/97</strain>
    </source>
</reference>
<reference key="2">
    <citation type="journal article" date="2017" name="Genome Announc.">
        <title>Updated reference genome sequence and annotation of Mycobacterium bovis AF2122/97.</title>
        <authorList>
            <person name="Malone K.M."/>
            <person name="Farrell D."/>
            <person name="Stuber T.P."/>
            <person name="Schubert O.T."/>
            <person name="Aebersold R."/>
            <person name="Robbe-Austerman S."/>
            <person name="Gordon S.V."/>
        </authorList>
    </citation>
    <scope>NUCLEOTIDE SEQUENCE [LARGE SCALE GENOMIC DNA]</scope>
    <scope>GENOME REANNOTATION</scope>
    <source>
        <strain>ATCC BAA-935 / AF2122/97</strain>
    </source>
</reference>
<gene>
    <name type="primary">trmD</name>
    <name type="ordered locus">BQ2027_MB2930C</name>
</gene>
<organism>
    <name type="scientific">Mycobacterium bovis (strain ATCC BAA-935 / AF2122/97)</name>
    <dbReference type="NCBI Taxonomy" id="233413"/>
    <lineage>
        <taxon>Bacteria</taxon>
        <taxon>Bacillati</taxon>
        <taxon>Actinomycetota</taxon>
        <taxon>Actinomycetes</taxon>
        <taxon>Mycobacteriales</taxon>
        <taxon>Mycobacteriaceae</taxon>
        <taxon>Mycobacterium</taxon>
        <taxon>Mycobacterium tuberculosis complex</taxon>
    </lineage>
</organism>
<proteinExistence type="inferred from homology"/>
<feature type="chain" id="PRO_0000060407" description="tRNA (guanine-N(1)-)-methyltransferase">
    <location>
        <begin position="1"/>
        <end position="230"/>
    </location>
</feature>
<feature type="binding site" evidence="1">
    <location>
        <position position="109"/>
    </location>
    <ligand>
        <name>S-adenosyl-L-methionine</name>
        <dbReference type="ChEBI" id="CHEBI:59789"/>
    </ligand>
</feature>
<feature type="binding site" evidence="1">
    <location>
        <begin position="133"/>
        <end position="138"/>
    </location>
    <ligand>
        <name>S-adenosyl-L-methionine</name>
        <dbReference type="ChEBI" id="CHEBI:59789"/>
    </ligand>
</feature>
<name>TRMD_MYCBO</name>
<dbReference type="EC" id="2.1.1.228"/>
<dbReference type="EMBL" id="LT708304">
    <property type="protein sequence ID" value="SIU01551.1"/>
    <property type="molecule type" value="Genomic_DNA"/>
</dbReference>
<dbReference type="RefSeq" id="NP_856575.1">
    <property type="nucleotide sequence ID" value="NC_002945.3"/>
</dbReference>
<dbReference type="RefSeq" id="WP_003414722.1">
    <property type="nucleotide sequence ID" value="NC_002945.4"/>
</dbReference>
<dbReference type="SMR" id="P66969"/>
<dbReference type="KEGG" id="mbo:BQ2027_MB2930C"/>
<dbReference type="PATRIC" id="fig|233413.5.peg.3216"/>
<dbReference type="Proteomes" id="UP000001419">
    <property type="component" value="Chromosome"/>
</dbReference>
<dbReference type="GO" id="GO:0005829">
    <property type="term" value="C:cytosol"/>
    <property type="evidence" value="ECO:0007669"/>
    <property type="project" value="TreeGrafter"/>
</dbReference>
<dbReference type="GO" id="GO:0052906">
    <property type="term" value="F:tRNA (guanine(37)-N1)-methyltransferase activity"/>
    <property type="evidence" value="ECO:0007669"/>
    <property type="project" value="UniProtKB-UniRule"/>
</dbReference>
<dbReference type="GO" id="GO:0002939">
    <property type="term" value="P:tRNA N1-guanine methylation"/>
    <property type="evidence" value="ECO:0007669"/>
    <property type="project" value="TreeGrafter"/>
</dbReference>
<dbReference type="CDD" id="cd18080">
    <property type="entry name" value="TrmD-like"/>
    <property type="match status" value="1"/>
</dbReference>
<dbReference type="FunFam" id="1.10.1270.20:FF:000004">
    <property type="entry name" value="tRNA (guanine-N(1)-)-methyltransferase"/>
    <property type="match status" value="1"/>
</dbReference>
<dbReference type="FunFam" id="3.40.1280.10:FF:000001">
    <property type="entry name" value="tRNA (guanine-N(1)-)-methyltransferase"/>
    <property type="match status" value="1"/>
</dbReference>
<dbReference type="Gene3D" id="3.40.1280.10">
    <property type="match status" value="1"/>
</dbReference>
<dbReference type="Gene3D" id="1.10.1270.20">
    <property type="entry name" value="tRNA(m1g37)methyltransferase, domain 2"/>
    <property type="match status" value="1"/>
</dbReference>
<dbReference type="HAMAP" id="MF_00605">
    <property type="entry name" value="TrmD"/>
    <property type="match status" value="1"/>
</dbReference>
<dbReference type="InterPro" id="IPR029028">
    <property type="entry name" value="Alpha/beta_knot_MTases"/>
</dbReference>
<dbReference type="InterPro" id="IPR023148">
    <property type="entry name" value="tRNA_m1G_MeTrfase_C_sf"/>
</dbReference>
<dbReference type="InterPro" id="IPR002649">
    <property type="entry name" value="tRNA_m1G_MeTrfase_TrmD"/>
</dbReference>
<dbReference type="InterPro" id="IPR029026">
    <property type="entry name" value="tRNA_m1G_MTases_N"/>
</dbReference>
<dbReference type="InterPro" id="IPR016009">
    <property type="entry name" value="tRNA_MeTrfase_TRMD/TRM10"/>
</dbReference>
<dbReference type="NCBIfam" id="NF000648">
    <property type="entry name" value="PRK00026.1"/>
    <property type="match status" value="1"/>
</dbReference>
<dbReference type="NCBIfam" id="TIGR00088">
    <property type="entry name" value="trmD"/>
    <property type="match status" value="1"/>
</dbReference>
<dbReference type="PANTHER" id="PTHR46417">
    <property type="entry name" value="TRNA (GUANINE-N(1)-)-METHYLTRANSFERASE"/>
    <property type="match status" value="1"/>
</dbReference>
<dbReference type="PANTHER" id="PTHR46417:SF1">
    <property type="entry name" value="TRNA (GUANINE-N(1)-)-METHYLTRANSFERASE"/>
    <property type="match status" value="1"/>
</dbReference>
<dbReference type="Pfam" id="PF01746">
    <property type="entry name" value="tRNA_m1G_MT"/>
    <property type="match status" value="1"/>
</dbReference>
<dbReference type="PIRSF" id="PIRSF000386">
    <property type="entry name" value="tRNA_mtase"/>
    <property type="match status" value="1"/>
</dbReference>
<dbReference type="SUPFAM" id="SSF75217">
    <property type="entry name" value="alpha/beta knot"/>
    <property type="match status" value="1"/>
</dbReference>
<keyword id="KW-0963">Cytoplasm</keyword>
<keyword id="KW-0489">Methyltransferase</keyword>
<keyword id="KW-1185">Reference proteome</keyword>
<keyword id="KW-0949">S-adenosyl-L-methionine</keyword>
<keyword id="KW-0808">Transferase</keyword>
<keyword id="KW-0819">tRNA processing</keyword>
<sequence>MRIDIVTIFPACLDPLRQSLPGKAIESGLVDLNVHDLRRWTHDVHHSVDDAPYGGGPGMVMKAPVWGEALDEICSSETLLIVPTPAGVLFTQATAQRWTTESHLVFACGRYEGIDQRVVQDAARRMRVEEVSIGDYVLPGGESAAVVMVEAVLRLLAGVLGNPASHQDDSHSTGLDGLLEGPSYTRPASWRGLDVPEVLLSGDHARIAAWRREVSLQRTRERRPDLSHPD</sequence>